<gene>
    <name type="primary">TOM6</name>
    <name type="ordered locus">At1g49410</name>
    <name type="ORF">F13F21.16</name>
</gene>
<reference evidence="6" key="1">
    <citation type="journal article" date="2000" name="Nature">
        <title>Sequence and analysis of chromosome 1 of the plant Arabidopsis thaliana.</title>
        <authorList>
            <person name="Theologis A."/>
            <person name="Ecker J.R."/>
            <person name="Palm C.J."/>
            <person name="Federspiel N.A."/>
            <person name="Kaul S."/>
            <person name="White O."/>
            <person name="Alonso J."/>
            <person name="Altafi H."/>
            <person name="Araujo R."/>
            <person name="Bowman C.L."/>
            <person name="Brooks S.Y."/>
            <person name="Buehler E."/>
            <person name="Chan A."/>
            <person name="Chao Q."/>
            <person name="Chen H."/>
            <person name="Cheuk R.F."/>
            <person name="Chin C.W."/>
            <person name="Chung M.K."/>
            <person name="Conn L."/>
            <person name="Conway A.B."/>
            <person name="Conway A.R."/>
            <person name="Creasy T.H."/>
            <person name="Dewar K."/>
            <person name="Dunn P."/>
            <person name="Etgu P."/>
            <person name="Feldblyum T.V."/>
            <person name="Feng J.-D."/>
            <person name="Fong B."/>
            <person name="Fujii C.Y."/>
            <person name="Gill J.E."/>
            <person name="Goldsmith A.D."/>
            <person name="Haas B."/>
            <person name="Hansen N.F."/>
            <person name="Hughes B."/>
            <person name="Huizar L."/>
            <person name="Hunter J.L."/>
            <person name="Jenkins J."/>
            <person name="Johnson-Hopson C."/>
            <person name="Khan S."/>
            <person name="Khaykin E."/>
            <person name="Kim C.J."/>
            <person name="Koo H.L."/>
            <person name="Kremenetskaia I."/>
            <person name="Kurtz D.B."/>
            <person name="Kwan A."/>
            <person name="Lam B."/>
            <person name="Langin-Hooper S."/>
            <person name="Lee A."/>
            <person name="Lee J.M."/>
            <person name="Lenz C.A."/>
            <person name="Li J.H."/>
            <person name="Li Y.-P."/>
            <person name="Lin X."/>
            <person name="Liu S.X."/>
            <person name="Liu Z.A."/>
            <person name="Luros J.S."/>
            <person name="Maiti R."/>
            <person name="Marziali A."/>
            <person name="Militscher J."/>
            <person name="Miranda M."/>
            <person name="Nguyen M."/>
            <person name="Nierman W.C."/>
            <person name="Osborne B.I."/>
            <person name="Pai G."/>
            <person name="Peterson J."/>
            <person name="Pham P.K."/>
            <person name="Rizzo M."/>
            <person name="Rooney T."/>
            <person name="Rowley D."/>
            <person name="Sakano H."/>
            <person name="Salzberg S.L."/>
            <person name="Schwartz J.R."/>
            <person name="Shinn P."/>
            <person name="Southwick A.M."/>
            <person name="Sun H."/>
            <person name="Tallon L.J."/>
            <person name="Tambunga G."/>
            <person name="Toriumi M.J."/>
            <person name="Town C.D."/>
            <person name="Utterback T."/>
            <person name="Van Aken S."/>
            <person name="Vaysberg M."/>
            <person name="Vysotskaia V.S."/>
            <person name="Walker M."/>
            <person name="Wu D."/>
            <person name="Yu G."/>
            <person name="Fraser C.M."/>
            <person name="Venter J.C."/>
            <person name="Davis R.W."/>
        </authorList>
    </citation>
    <scope>NUCLEOTIDE SEQUENCE [LARGE SCALE GENOMIC DNA]</scope>
    <source>
        <strain evidence="2">cv. Columbia</strain>
    </source>
</reference>
<reference key="2">
    <citation type="journal article" date="2017" name="Plant J.">
        <title>Araport11: a complete reannotation of the Arabidopsis thaliana reference genome.</title>
        <authorList>
            <person name="Cheng C.Y."/>
            <person name="Krishnakumar V."/>
            <person name="Chan A.P."/>
            <person name="Thibaud-Nissen F."/>
            <person name="Schobel S."/>
            <person name="Town C.D."/>
        </authorList>
    </citation>
    <scope>GENOME REANNOTATION</scope>
    <source>
        <strain>cv. Columbia</strain>
    </source>
</reference>
<reference evidence="6" key="3">
    <citation type="journal article" date="2003" name="Science">
        <title>Empirical analysis of transcriptional activity in the Arabidopsis genome.</title>
        <authorList>
            <person name="Yamada K."/>
            <person name="Lim J."/>
            <person name="Dale J.M."/>
            <person name="Chen H."/>
            <person name="Shinn P."/>
            <person name="Palm C.J."/>
            <person name="Southwick A.M."/>
            <person name="Wu H.C."/>
            <person name="Kim C.J."/>
            <person name="Nguyen M."/>
            <person name="Pham P.K."/>
            <person name="Cheuk R.F."/>
            <person name="Karlin-Newmann G."/>
            <person name="Liu S.X."/>
            <person name="Lam B."/>
            <person name="Sakano H."/>
            <person name="Wu T."/>
            <person name="Yu G."/>
            <person name="Miranda M."/>
            <person name="Quach H.L."/>
            <person name="Tripp M."/>
            <person name="Chang C.H."/>
            <person name="Lee J.M."/>
            <person name="Toriumi M.J."/>
            <person name="Chan M.M."/>
            <person name="Tang C.C."/>
            <person name="Onodera C.S."/>
            <person name="Deng J.M."/>
            <person name="Akiyama K."/>
            <person name="Ansari Y."/>
            <person name="Arakawa T."/>
            <person name="Banh J."/>
            <person name="Banno F."/>
            <person name="Bowser L."/>
            <person name="Brooks S.Y."/>
            <person name="Carninci P."/>
            <person name="Chao Q."/>
            <person name="Choy N."/>
            <person name="Enju A."/>
            <person name="Goldsmith A.D."/>
            <person name="Gurjal M."/>
            <person name="Hansen N.F."/>
            <person name="Hayashizaki Y."/>
            <person name="Johnson-Hopson C."/>
            <person name="Hsuan V.W."/>
            <person name="Iida K."/>
            <person name="Karnes M."/>
            <person name="Khan S."/>
            <person name="Koesema E."/>
            <person name="Ishida J."/>
            <person name="Jiang P.X."/>
            <person name="Jones T."/>
            <person name="Kawai J."/>
            <person name="Kamiya A."/>
            <person name="Meyers C."/>
            <person name="Nakajima M."/>
            <person name="Narusaka M."/>
            <person name="Seki M."/>
            <person name="Sakurai T."/>
            <person name="Satou M."/>
            <person name="Tamse R."/>
            <person name="Vaysberg M."/>
            <person name="Wallender E.K."/>
            <person name="Wong C."/>
            <person name="Yamamura Y."/>
            <person name="Yuan S."/>
            <person name="Shinozaki K."/>
            <person name="Davis R.W."/>
            <person name="Theologis A."/>
            <person name="Ecker J.R."/>
        </authorList>
    </citation>
    <scope>NUCLEOTIDE SEQUENCE [LARGE SCALE MRNA]</scope>
    <source>
        <strain evidence="3">cv. Columbia</strain>
    </source>
</reference>
<reference evidence="6" key="4">
    <citation type="journal article" date="2003" name="Plant Physiol. Biochem.">
        <title>Identification of novel subunits of the TOM complex from Arabidopsis thaliana.</title>
        <authorList>
            <person name="Werhahn W."/>
            <person name="Jaensch L."/>
            <person name="Braun H.-P."/>
        </authorList>
    </citation>
    <scope>PROTEIN SEQUENCE OF 1-12</scope>
    <scope>SUBUNIT</scope>
    <scope>SUBCELLULAR LOCATION</scope>
</reference>
<reference key="5">
    <citation type="journal article" date="2004" name="Plant Physiol.">
        <title>A transcriptomic and proteomic characterization of the Arabidopsis mitochondrial protein import apparatus and its response to mitochondrial dysfunction.</title>
        <authorList>
            <person name="Lister R."/>
            <person name="Chew O."/>
            <person name="Lee M.N."/>
            <person name="Heazlewood J.L."/>
            <person name="Clifton R."/>
            <person name="Parker K.L."/>
            <person name="Millar A.H."/>
            <person name="Whelan J."/>
        </authorList>
    </citation>
    <scope>TISSUE SPECIFICITY</scope>
    <scope>SUBCELLULAR LOCATION</scope>
    <scope>IDENTIFICATION BY MASS SPECTROMETRY</scope>
</reference>
<reference key="6">
    <citation type="journal article" date="2012" name="Mol. Cell. Proteomics">
        <title>Comparative large-scale characterisation of plant vs. mammal proteins reveals similar and idiosyncratic N-alpha acetylation features.</title>
        <authorList>
            <person name="Bienvenut W.V."/>
            <person name="Sumpton D."/>
            <person name="Martinez A."/>
            <person name="Lilla S."/>
            <person name="Espagne C."/>
            <person name="Meinnel T."/>
            <person name="Giglione C."/>
        </authorList>
    </citation>
    <scope>ACETYLATION [LARGE SCALE ANALYSIS] AT MET-1</scope>
    <scope>IDENTIFICATION BY MASS SPECTROMETRY [LARGE SCALE ANALYSIS]</scope>
</reference>
<evidence type="ECO:0000255" key="1"/>
<evidence type="ECO:0000269" key="2">
    <source>
    </source>
</evidence>
<evidence type="ECO:0000269" key="3">
    <source>
    </source>
</evidence>
<evidence type="ECO:0000269" key="4">
    <source>
    </source>
</evidence>
<evidence type="ECO:0000269" key="5">
    <source ref="4"/>
</evidence>
<evidence type="ECO:0000305" key="6"/>
<evidence type="ECO:0000312" key="7">
    <source>
        <dbReference type="EMBL" id="AAG42015.1"/>
    </source>
</evidence>
<evidence type="ECO:0007744" key="8">
    <source>
    </source>
</evidence>
<keyword id="KW-0007">Acetylation</keyword>
<keyword id="KW-0903">Direct protein sequencing</keyword>
<keyword id="KW-0472">Membrane</keyword>
<keyword id="KW-0496">Mitochondrion</keyword>
<keyword id="KW-1000">Mitochondrion outer membrane</keyword>
<keyword id="KW-0653">Protein transport</keyword>
<keyword id="KW-1185">Reference proteome</keyword>
<keyword id="KW-0812">Transmembrane</keyword>
<keyword id="KW-1133">Transmembrane helix</keyword>
<keyword id="KW-0813">Transport</keyword>
<name>TOM6_ARATH</name>
<proteinExistence type="evidence at protein level"/>
<sequence length="54" mass="6265">MFPGMFMRKPDKAEALKQLRTHVALFGSWVVIIRAAPYVLSYFSDSKDELKIDF</sequence>
<feature type="chain" id="PRO_0000210819" description="Mitochondrial import receptor subunit TOM6 homolog">
    <location>
        <begin position="1"/>
        <end position="54"/>
    </location>
</feature>
<feature type="transmembrane region" description="Helical" evidence="1">
    <location>
        <begin position="21"/>
        <end position="43"/>
    </location>
</feature>
<feature type="modified residue" description="N-acetylmethionine" evidence="8">
    <location>
        <position position="1"/>
    </location>
</feature>
<comment type="function">
    <text evidence="6">A component of the complex responsible for the recognition and translocation of cytosolically synthesized mitochondrial preproteins.</text>
</comment>
<comment type="subunit">
    <text evidence="5 6">Forms part of the receptor complex that consists of at least 6 different proteins (TOM5, TOM6, TOM7, TOM20, TOM22/TOM9 and TOM40).</text>
</comment>
<comment type="subcellular location">
    <subcellularLocation>
        <location evidence="4 5">Mitochondrion outer membrane</location>
        <topology evidence="4 5">Single-pass membrane protein</topology>
    </subcellularLocation>
</comment>
<comment type="tissue specificity">
    <text evidence="4">Expressed in roots, flowers, young cotyledons and leaves.</text>
</comment>
<comment type="similarity">
    <text evidence="6">Belongs to the Tom6 family.</text>
</comment>
<organism evidence="7">
    <name type="scientific">Arabidopsis thaliana</name>
    <name type="common">Mouse-ear cress</name>
    <dbReference type="NCBI Taxonomy" id="3702"/>
    <lineage>
        <taxon>Eukaryota</taxon>
        <taxon>Viridiplantae</taxon>
        <taxon>Streptophyta</taxon>
        <taxon>Embryophyta</taxon>
        <taxon>Tracheophyta</taxon>
        <taxon>Spermatophyta</taxon>
        <taxon>Magnoliopsida</taxon>
        <taxon>eudicotyledons</taxon>
        <taxon>Gunneridae</taxon>
        <taxon>Pentapetalae</taxon>
        <taxon>rosids</taxon>
        <taxon>malvids</taxon>
        <taxon>Brassicales</taxon>
        <taxon>Brassicaceae</taxon>
        <taxon>Camelineae</taxon>
        <taxon>Arabidopsis</taxon>
    </lineage>
</organism>
<dbReference type="EMBL" id="AC007504">
    <property type="protein sequence ID" value="AAD43159.1"/>
    <property type="molecule type" value="Genomic_DNA"/>
</dbReference>
<dbReference type="EMBL" id="CP002684">
    <property type="protein sequence ID" value="AEE32427.1"/>
    <property type="molecule type" value="Genomic_DNA"/>
</dbReference>
<dbReference type="EMBL" id="AF327425">
    <property type="protein sequence ID" value="AAG42015.1"/>
    <property type="molecule type" value="mRNA"/>
</dbReference>
<dbReference type="EMBL" id="AF324714">
    <property type="protein sequence ID" value="AAG40065.1"/>
    <property type="molecule type" value="mRNA"/>
</dbReference>
<dbReference type="EMBL" id="AF325059">
    <property type="protein sequence ID" value="AAG40411.1"/>
    <property type="molecule type" value="mRNA"/>
</dbReference>
<dbReference type="EMBL" id="AF339720">
    <property type="protein sequence ID" value="AAK00402.1"/>
    <property type="molecule type" value="mRNA"/>
</dbReference>
<dbReference type="EMBL" id="AY037189">
    <property type="protein sequence ID" value="AAK59774.1"/>
    <property type="molecule type" value="mRNA"/>
</dbReference>
<dbReference type="EMBL" id="BT002672">
    <property type="protein sequence ID" value="AAO11588.1"/>
    <property type="molecule type" value="mRNA"/>
</dbReference>
<dbReference type="PIR" id="E96530">
    <property type="entry name" value="E96530"/>
</dbReference>
<dbReference type="RefSeq" id="NP_564545.1">
    <property type="nucleotide sequence ID" value="NM_103831.5"/>
</dbReference>
<dbReference type="SMR" id="Q9XIA7"/>
<dbReference type="BioGRID" id="26590">
    <property type="interactions" value="1"/>
</dbReference>
<dbReference type="FunCoup" id="Q9XIA7">
    <property type="interactions" value="642"/>
</dbReference>
<dbReference type="IntAct" id="Q9XIA7">
    <property type="interactions" value="1"/>
</dbReference>
<dbReference type="STRING" id="3702.Q9XIA7"/>
<dbReference type="iPTMnet" id="Q9XIA7"/>
<dbReference type="PaxDb" id="3702-AT1G49410.1"/>
<dbReference type="ProteomicsDB" id="234457"/>
<dbReference type="EnsemblPlants" id="AT1G49410.1">
    <property type="protein sequence ID" value="AT1G49410.1"/>
    <property type="gene ID" value="AT1G49410"/>
</dbReference>
<dbReference type="GeneID" id="841365"/>
<dbReference type="Gramene" id="AT1G49410.1">
    <property type="protein sequence ID" value="AT1G49410.1"/>
    <property type="gene ID" value="AT1G49410"/>
</dbReference>
<dbReference type="KEGG" id="ath:AT1G49410"/>
<dbReference type="Araport" id="AT1G49410"/>
<dbReference type="TAIR" id="AT1G49410">
    <property type="gene designation" value="TOM6"/>
</dbReference>
<dbReference type="eggNOG" id="ENOG502S7ED">
    <property type="taxonomic scope" value="Eukaryota"/>
</dbReference>
<dbReference type="HOGENOM" id="CLU_188823_0_0_1"/>
<dbReference type="InParanoid" id="Q9XIA7"/>
<dbReference type="OMA" id="WVVVIRA"/>
<dbReference type="PhylomeDB" id="Q9XIA7"/>
<dbReference type="PRO" id="PR:Q9XIA7"/>
<dbReference type="Proteomes" id="UP000006548">
    <property type="component" value="Chromosome 1"/>
</dbReference>
<dbReference type="ExpressionAtlas" id="Q9XIA7">
    <property type="expression patterns" value="baseline and differential"/>
</dbReference>
<dbReference type="GO" id="GO:0005742">
    <property type="term" value="C:mitochondrial outer membrane translocase complex"/>
    <property type="evidence" value="ECO:0007669"/>
    <property type="project" value="InterPro"/>
</dbReference>
<dbReference type="GO" id="GO:0005739">
    <property type="term" value="C:mitochondrion"/>
    <property type="evidence" value="ECO:0007005"/>
    <property type="project" value="TAIR"/>
</dbReference>
<dbReference type="GO" id="GO:0015031">
    <property type="term" value="P:protein transport"/>
    <property type="evidence" value="ECO:0007669"/>
    <property type="project" value="UniProtKB-KW"/>
</dbReference>
<dbReference type="InterPro" id="IPR034554">
    <property type="entry name" value="TOM6_plants"/>
</dbReference>
<dbReference type="PANTHER" id="PTHR35999">
    <property type="entry name" value="MITOCHONDRIAL IMPORT RECEPTOR SUBUNIT TOM6 HOMOLOG"/>
    <property type="match status" value="1"/>
</dbReference>
<dbReference type="PANTHER" id="PTHR35999:SF1">
    <property type="entry name" value="MITOCHONDRIAL IMPORT RECEPTOR SUBUNIT TOM6 HOMOLOG"/>
    <property type="match status" value="1"/>
</dbReference>
<protein>
    <recommendedName>
        <fullName>Mitochondrial import receptor subunit TOM6 homolog</fullName>
    </recommendedName>
    <alternativeName>
        <fullName>Translocase of outer membrane 6 kDa subunit homolog</fullName>
    </alternativeName>
</protein>
<accession>Q9XIA7</accession>
<accession>P83432</accession>